<sequence>MSNDGRSRNRDRRYDEVPSDLPYQDTTIRTHPTLHDSERAVSADPLPPPPLPLQPPFGPDFYSSDTEEPAIAPDLKPVRRFVPDSWKNFFRGKKKDPEWDKPVSDIRYISDGVECSPPASPARPNHRSPLNSCKDPYGGSEGTFSSRKEADAVFPRDPYGSLDRHTQTVRTYSEKVEEYNLRYSYMKSWAGLLRILGVVELLLGAGVFACVTAYIHKDSEWYNLFGYSQPYGMGGVGGLGSMYGGYYYTGPKTPFVLVVAGLAWITTIIILVLGMSMYYRTILLDSNWWPLTEFGINVALFILYMAAAIVYVNDTNRGGLCYYPLFNTPVNAVFCRVEGGQIAAMIFLFVTMIVYLISALVCLKLWRHEAARRHREYMEQQEINEPSLSSKRKMCEMATSGDRQRDSEVNFKELRTAKMKPELLSGHIPPGHIPKPIVMPDYVAKYPVIQTDDERERYKAVFQDQFSEYKELSAEVQAVLRKFDELDAVMSRLPHHSESRQEHERISRIHEEFKKKKNDPTFLEKKERCDYLKNKLSHIKQRIQEYDKVMNWDVQGYS</sequence>
<feature type="chain" id="PRO_0000271526" description="MARVEL domain-containing protein 2">
    <location>
        <begin position="1"/>
        <end position="558"/>
    </location>
</feature>
<feature type="topological domain" description="Cytoplasmic" evidence="2">
    <location>
        <begin position="1"/>
        <end position="194"/>
    </location>
</feature>
<feature type="transmembrane region" description="Helical" evidence="2">
    <location>
        <begin position="195"/>
        <end position="215"/>
    </location>
</feature>
<feature type="topological domain" description="Extracellular" evidence="2">
    <location>
        <begin position="216"/>
        <end position="223"/>
    </location>
</feature>
<feature type="transmembrane region" description="Helical" evidence="2">
    <location>
        <begin position="224"/>
        <end position="244"/>
    </location>
</feature>
<feature type="topological domain" description="Cytoplasmic" evidence="2">
    <location>
        <begin position="245"/>
        <end position="254"/>
    </location>
</feature>
<feature type="transmembrane region" description="Helical" evidence="2">
    <location>
        <begin position="255"/>
        <end position="275"/>
    </location>
</feature>
<feature type="topological domain" description="Extracellular" evidence="2">
    <location>
        <begin position="276"/>
        <end position="291"/>
    </location>
</feature>
<feature type="transmembrane region" description="Helical" evidence="2">
    <location>
        <begin position="292"/>
        <end position="312"/>
    </location>
</feature>
<feature type="topological domain" description="Cytoplasmic" evidence="2">
    <location>
        <begin position="313"/>
        <end position="319"/>
    </location>
</feature>
<feature type="transmembrane region" description="Helical" evidence="2">
    <location>
        <begin position="320"/>
        <end position="337"/>
    </location>
</feature>
<feature type="topological domain" description="Extracellular" evidence="2">
    <location>
        <begin position="338"/>
        <end position="341"/>
    </location>
</feature>
<feature type="transmembrane region" description="Helical" evidence="2">
    <location>
        <begin position="342"/>
        <end position="362"/>
    </location>
</feature>
<feature type="topological domain" description="Cytoplasmic" evidence="2">
    <location>
        <begin position="363"/>
        <end position="558"/>
    </location>
</feature>
<feature type="domain" description="MARVEL" evidence="3">
    <location>
        <begin position="188"/>
        <end position="367"/>
    </location>
</feature>
<feature type="domain" description="OCEL" evidence="4">
    <location>
        <begin position="440"/>
        <end position="551"/>
    </location>
</feature>
<feature type="region of interest" description="Disordered" evidence="5">
    <location>
        <begin position="1"/>
        <end position="58"/>
    </location>
</feature>
<feature type="region of interest" description="Disordered" evidence="5">
    <location>
        <begin position="115"/>
        <end position="145"/>
    </location>
</feature>
<feature type="coiled-coil region" evidence="12">
    <location>
        <begin position="439"/>
        <end position="548"/>
    </location>
</feature>
<feature type="compositionally biased region" description="Basic and acidic residues" evidence="5">
    <location>
        <begin position="1"/>
        <end position="16"/>
    </location>
</feature>
<feature type="compositionally biased region" description="Pro residues" evidence="5">
    <location>
        <begin position="45"/>
        <end position="58"/>
    </location>
</feature>
<feature type="modified residue" description="Phosphoserine" evidence="22 23">
    <location>
        <position position="116"/>
    </location>
</feature>
<feature type="modified residue" description="Phosphoserine" evidence="22 23">
    <location>
        <position position="120"/>
    </location>
</feature>
<feature type="modified residue" description="Phosphoserine" evidence="24">
    <location>
        <position position="161"/>
    </location>
</feature>
<feature type="modified residue" description="Phosphothreonine" evidence="24">
    <location>
        <position position="166"/>
    </location>
</feature>
<feature type="modified residue" description="Phosphoserine" evidence="24">
    <location>
        <position position="387"/>
    </location>
</feature>
<feature type="cross-link" description="Glycyl lysine isopeptide (Lys-Gly) (interchain with G-Cter in ubiquitin)" evidence="13">
    <location>
        <position position="412"/>
    </location>
</feature>
<feature type="splice variant" id="VSP_035760" description="In isoform 3." evidence="16">
    <location>
        <begin position="383"/>
        <end position="394"/>
    </location>
</feature>
<feature type="splice variant" id="VSP_022320" description="In isoform 2." evidence="14 15">
    <original>GHIPKPIVMPDYVAKYPVIQTDDERER</original>
    <variation>RPANFFVFLVEMGFHRVSQDDLDLLTS</variation>
    <location>
        <begin position="431"/>
        <end position="457"/>
    </location>
</feature>
<feature type="splice variant" id="VSP_022321" description="In isoform 2." evidence="14 15">
    <location>
        <begin position="458"/>
        <end position="558"/>
    </location>
</feature>
<feature type="sequence variant" id="VAR_047436" description="In dbSNP:rs1185246." evidence="6 7 8 9 10">
    <original>T</original>
    <variation>I</variation>
    <location>
        <position position="33"/>
    </location>
</feature>
<feature type="sequence conflict" description="In Ref. 3; BAF85651." evidence="17" ref="3">
    <original>L</original>
    <variation>P</variation>
    <location>
        <position position="356"/>
    </location>
</feature>
<feature type="sequence conflict" description="In Ref. 3; BAF85651." evidence="17" ref="3">
    <original>K</original>
    <variation>R</variation>
    <location>
        <position position="435"/>
    </location>
</feature>
<feature type="helix" evidence="25">
    <location>
        <begin position="442"/>
        <end position="445"/>
    </location>
</feature>
<feature type="helix" evidence="25">
    <location>
        <begin position="452"/>
        <end position="487"/>
    </location>
</feature>
<feature type="helix" evidence="26">
    <location>
        <begin position="489"/>
        <end position="492"/>
    </location>
</feature>
<feature type="helix" evidence="26">
    <location>
        <begin position="493"/>
        <end position="495"/>
    </location>
</feature>
<feature type="helix" evidence="25">
    <location>
        <begin position="500"/>
        <end position="517"/>
    </location>
</feature>
<feature type="helix" evidence="25">
    <location>
        <begin position="520"/>
        <end position="549"/>
    </location>
</feature>
<evidence type="ECO:0000250" key="1">
    <source>
        <dbReference type="UniProtKB" id="Q3UZP0"/>
    </source>
</evidence>
<evidence type="ECO:0000255" key="2"/>
<evidence type="ECO:0000255" key="3">
    <source>
        <dbReference type="PROSITE-ProRule" id="PRU00581"/>
    </source>
</evidence>
<evidence type="ECO:0000255" key="4">
    <source>
        <dbReference type="PROSITE-ProRule" id="PRU01324"/>
    </source>
</evidence>
<evidence type="ECO:0000256" key="5">
    <source>
        <dbReference type="SAM" id="MobiDB-lite"/>
    </source>
</evidence>
<evidence type="ECO:0000269" key="6">
    <source>
    </source>
</evidence>
<evidence type="ECO:0000269" key="7">
    <source>
    </source>
</evidence>
<evidence type="ECO:0000269" key="8">
    <source>
    </source>
</evidence>
<evidence type="ECO:0000269" key="9">
    <source>
    </source>
</evidence>
<evidence type="ECO:0000269" key="10">
    <source>
    </source>
</evidence>
<evidence type="ECO:0000269" key="11">
    <source>
    </source>
</evidence>
<evidence type="ECO:0000269" key="12">
    <source>
    </source>
</evidence>
<evidence type="ECO:0000269" key="13">
    <source>
    </source>
</evidence>
<evidence type="ECO:0000303" key="14">
    <source>
    </source>
</evidence>
<evidence type="ECO:0000303" key="15">
    <source>
    </source>
</evidence>
<evidence type="ECO:0000303" key="16">
    <source>
    </source>
</evidence>
<evidence type="ECO:0000305" key="17"/>
<evidence type="ECO:0000312" key="18">
    <source>
        <dbReference type="HGNC" id="HGNC:26401"/>
    </source>
</evidence>
<evidence type="ECO:0007744" key="19">
    <source>
        <dbReference type="PDB" id="5N7H"/>
    </source>
</evidence>
<evidence type="ECO:0007744" key="20">
    <source>
        <dbReference type="PDB" id="5N7I"/>
    </source>
</evidence>
<evidence type="ECO:0007744" key="21">
    <source>
        <dbReference type="PDB" id="5N7K"/>
    </source>
</evidence>
<evidence type="ECO:0007744" key="22">
    <source>
    </source>
</evidence>
<evidence type="ECO:0007744" key="23">
    <source>
    </source>
</evidence>
<evidence type="ECO:0007744" key="24">
    <source>
    </source>
</evidence>
<evidence type="ECO:0007829" key="25">
    <source>
        <dbReference type="PDB" id="5N7H"/>
    </source>
</evidence>
<evidence type="ECO:0007829" key="26">
    <source>
        <dbReference type="PDB" id="5N7K"/>
    </source>
</evidence>
<name>MALD2_HUMAN</name>
<protein>
    <recommendedName>
        <fullName evidence="17">MARVEL domain-containing protein 2</fullName>
    </recommendedName>
    <alternativeName>
        <fullName evidence="15">Tricellulin</fullName>
    </alternativeName>
</protein>
<organism>
    <name type="scientific">Homo sapiens</name>
    <name type="common">Human</name>
    <dbReference type="NCBI Taxonomy" id="9606"/>
    <lineage>
        <taxon>Eukaryota</taxon>
        <taxon>Metazoa</taxon>
        <taxon>Chordata</taxon>
        <taxon>Craniata</taxon>
        <taxon>Vertebrata</taxon>
        <taxon>Euteleostomi</taxon>
        <taxon>Mammalia</taxon>
        <taxon>Eutheria</taxon>
        <taxon>Euarchontoglires</taxon>
        <taxon>Primates</taxon>
        <taxon>Haplorrhini</taxon>
        <taxon>Catarrhini</taxon>
        <taxon>Hominidae</taxon>
        <taxon>Homo</taxon>
    </lineage>
</organism>
<accession>Q8N4S9</accession>
<accession>A1BQX0</accession>
<accession>A1BQX1</accession>
<accession>A8KA97</accession>
<accession>Q96NM9</accession>
<gene>
    <name evidence="18" type="primary">MARVELD2</name>
    <name type="synonym">TRIC</name>
</gene>
<comment type="function">
    <text evidence="1 10">Plays a role in the formation of tricellular tight junctions and of epithelial barriers (By similarity). Required for normal hearing via its role in the separation of the endolymphatic and perilymphatic spaces of the organ of Corti in the inner ear, and for normal survival of hair cells in the organ of Corti (PubMed:17186462).</text>
</comment>
<comment type="subunit">
    <text evidence="1 10 11">Interacts with TJP1 (PubMed:17186462). Interacts with the ubiquitin ligase ITCH (PubMed:28436082). Interacts (via C-terminal cytoplasmic domain) with LSR (via the cytoplasmic domain), ILDR1 and ILDR2; the interaction is required to recruit MARVELD2 to tricellular contacts (By similarity).</text>
</comment>
<comment type="interaction">
    <interactant intactId="EBI-6875061">
        <id>Q8N4S9</id>
    </interactant>
    <interactant intactId="EBI-743099">
        <id>Q969F0</id>
        <label>FATE1</label>
    </interactant>
    <organismsDiffer>false</organismsDiffer>
    <experiments>3</experiments>
</comment>
<comment type="interaction">
    <interactant intactId="EBI-6875061">
        <id>Q8N4S9</id>
    </interactant>
    <interactant intactId="EBI-999394">
        <id>P00747</id>
        <label>PLG</label>
    </interactant>
    <organismsDiffer>false</organismsDiffer>
    <experiments>2</experiments>
</comment>
<comment type="subcellular location">
    <subcellularLocation>
        <location evidence="12">Cell membrane</location>
        <topology evidence="17">Multi-pass membrane protein</topology>
    </subcellularLocation>
    <subcellularLocation>
        <location evidence="12">Cell junction</location>
        <location evidence="12">Tight junction</location>
    </subcellularLocation>
    <text evidence="12">Located at tricellular contacts.</text>
</comment>
<comment type="alternative products">
    <event type="alternative splicing"/>
    <isoform>
        <id>Q8N4S9-1</id>
        <name>1</name>
        <name>A</name>
        <name>TRIC</name>
        <sequence type="displayed"/>
    </isoform>
    <isoform>
        <id>Q8N4S9-2</id>
        <name>2</name>
        <name>TRICbeta</name>
        <sequence type="described" ref="VSP_022320 VSP_022321"/>
    </isoform>
    <isoform>
        <id>Q8N4S9-3</id>
        <name>3</name>
        <name>A1</name>
        <sequence type="described" ref="VSP_035760"/>
    </isoform>
</comment>
<comment type="PTM">
    <text evidence="11 13">Ubiquitinated by ITCH; but this ubiquitination does not lead to proteasomal degradation (PubMed:28436082). Polyubiquitinated at Lys-412 via 'Lys-63'-linked ubiquitin chains; deubiquitinated by USP53 (PubMed:39587316).</text>
</comment>
<comment type="PTM">
    <text evidence="1">Phosphorylated.</text>
</comment>
<comment type="disease" evidence="10">
    <disease id="DI-00875">
        <name>Deafness, autosomal recessive, 49</name>
        <acronym>DFNB49</acronym>
        <description>A form of non-syndromic sensorineural hearing loss. Sensorineural deafness results from damage to the neural receptors of the inner ear, the nerve pathways to the brain, or the area of the brain that receives sound information.</description>
        <dbReference type="MIM" id="610153"/>
    </disease>
    <text>The disease is caused by variants affecting the gene represented in this entry.</text>
</comment>
<comment type="similarity">
    <text evidence="4">Belongs to the ELL/occludin family.</text>
</comment>
<dbReference type="EMBL" id="AB219936">
    <property type="protein sequence ID" value="BAE54513.1"/>
    <property type="molecule type" value="mRNA"/>
</dbReference>
<dbReference type="EMBL" id="AB219937">
    <property type="protein sequence ID" value="BAE54514.1"/>
    <property type="molecule type" value="mRNA"/>
</dbReference>
<dbReference type="EMBL" id="DQ682656">
    <property type="protein sequence ID" value="ABG89104.1"/>
    <property type="molecule type" value="mRNA"/>
</dbReference>
<dbReference type="EMBL" id="DQ682657">
    <property type="protein sequence ID" value="ABG89105.1"/>
    <property type="molecule type" value="mRNA"/>
</dbReference>
<dbReference type="EMBL" id="AK055094">
    <property type="protein sequence ID" value="BAB70853.1"/>
    <property type="molecule type" value="mRNA"/>
</dbReference>
<dbReference type="EMBL" id="AK292962">
    <property type="protein sequence ID" value="BAF85651.1"/>
    <property type="molecule type" value="mRNA"/>
</dbReference>
<dbReference type="EMBL" id="AC145146">
    <property type="status" value="NOT_ANNOTATED_CDS"/>
    <property type="molecule type" value="Genomic_DNA"/>
</dbReference>
<dbReference type="EMBL" id="CH471137">
    <property type="protein sequence ID" value="EAW51277.1"/>
    <property type="molecule type" value="Genomic_DNA"/>
</dbReference>
<dbReference type="EMBL" id="BC033689">
    <property type="protein sequence ID" value="AAH33689.1"/>
    <property type="molecule type" value="mRNA"/>
</dbReference>
<dbReference type="CCDS" id="CCDS34175.1">
    <molecule id="Q8N4S9-1"/>
</dbReference>
<dbReference type="CCDS" id="CCDS58956.1">
    <molecule id="Q8N4S9-3"/>
</dbReference>
<dbReference type="RefSeq" id="NP_001033692.2">
    <molecule id="Q8N4S9-1"/>
    <property type="nucleotide sequence ID" value="NM_001038603.3"/>
</dbReference>
<dbReference type="RefSeq" id="NP_001231663.1">
    <molecule id="Q8N4S9-3"/>
    <property type="nucleotide sequence ID" value="NM_001244734.2"/>
</dbReference>
<dbReference type="RefSeq" id="XP_005248502.1">
    <molecule id="Q8N4S9-1"/>
    <property type="nucleotide sequence ID" value="XM_005248445.5"/>
</dbReference>
<dbReference type="RefSeq" id="XP_005248503.1">
    <molecule id="Q8N4S9-1"/>
    <property type="nucleotide sequence ID" value="XM_005248446.5"/>
</dbReference>
<dbReference type="RefSeq" id="XP_005248504.1">
    <molecule id="Q8N4S9-3"/>
    <property type="nucleotide sequence ID" value="XM_005248447.5"/>
</dbReference>
<dbReference type="RefSeq" id="XP_054188987.1">
    <molecule id="Q8N4S9-1"/>
    <property type="nucleotide sequence ID" value="XM_054333012.1"/>
</dbReference>
<dbReference type="RefSeq" id="XP_054188988.1">
    <molecule id="Q8N4S9-1"/>
    <property type="nucleotide sequence ID" value="XM_054333013.1"/>
</dbReference>
<dbReference type="RefSeq" id="XP_054188989.1">
    <molecule id="Q8N4S9-3"/>
    <property type="nucleotide sequence ID" value="XM_054333014.1"/>
</dbReference>
<dbReference type="RefSeq" id="XP_054188990.1">
    <molecule id="Q8N4S9-3"/>
    <property type="nucleotide sequence ID" value="XM_054333015.1"/>
</dbReference>
<dbReference type="PDB" id="5N7H">
    <property type="method" value="X-ray"/>
    <property type="resolution" value="2.20 A"/>
    <property type="chains" value="A=439-551"/>
</dbReference>
<dbReference type="PDB" id="5N7I">
    <property type="method" value="X-ray"/>
    <property type="resolution" value="2.88 A"/>
    <property type="chains" value="A/B=439-551"/>
</dbReference>
<dbReference type="PDB" id="5N7K">
    <property type="method" value="X-ray"/>
    <property type="resolution" value="2.81 A"/>
    <property type="chains" value="A/B/C/D=439-551"/>
</dbReference>
<dbReference type="PDBsum" id="5N7H"/>
<dbReference type="PDBsum" id="5N7I"/>
<dbReference type="PDBsum" id="5N7K"/>
<dbReference type="SMR" id="Q8N4S9"/>
<dbReference type="BioGRID" id="127502">
    <property type="interactions" value="64"/>
</dbReference>
<dbReference type="FunCoup" id="Q8N4S9">
    <property type="interactions" value="404"/>
</dbReference>
<dbReference type="IntAct" id="Q8N4S9">
    <property type="interactions" value="29"/>
</dbReference>
<dbReference type="MINT" id="Q8N4S9"/>
<dbReference type="STRING" id="9606.ENSP00000323264"/>
<dbReference type="TCDB" id="9.B.41.2.1">
    <property type="family name" value="the occludin (occludin) family"/>
</dbReference>
<dbReference type="iPTMnet" id="Q8N4S9"/>
<dbReference type="PhosphoSitePlus" id="Q8N4S9"/>
<dbReference type="SwissPalm" id="Q8N4S9"/>
<dbReference type="BioMuta" id="MARVELD2"/>
<dbReference type="DMDM" id="317373387"/>
<dbReference type="jPOST" id="Q8N4S9"/>
<dbReference type="MassIVE" id="Q8N4S9"/>
<dbReference type="PaxDb" id="9606-ENSP00000323264"/>
<dbReference type="PeptideAtlas" id="Q8N4S9"/>
<dbReference type="ProteomicsDB" id="71965">
    <molecule id="Q8N4S9-1"/>
</dbReference>
<dbReference type="ProteomicsDB" id="71966">
    <molecule id="Q8N4S9-2"/>
</dbReference>
<dbReference type="ProteomicsDB" id="71967">
    <molecule id="Q8N4S9-3"/>
</dbReference>
<dbReference type="Pumba" id="Q8N4S9"/>
<dbReference type="Antibodypedia" id="23961">
    <property type="antibodies" value="172 antibodies from 25 providers"/>
</dbReference>
<dbReference type="DNASU" id="153562"/>
<dbReference type="Ensembl" id="ENST00000325631.10">
    <molecule id="Q8N4S9-1"/>
    <property type="protein sequence ID" value="ENSP00000323264.5"/>
    <property type="gene ID" value="ENSG00000152939.17"/>
</dbReference>
<dbReference type="Ensembl" id="ENST00000454295.6">
    <molecule id="Q8N4S9-3"/>
    <property type="protein sequence ID" value="ENSP00000396244.2"/>
    <property type="gene ID" value="ENSG00000152939.17"/>
</dbReference>
<dbReference type="Ensembl" id="ENST00000614617.4">
    <property type="protein sequence ID" value="ENSP00000480044.1"/>
    <property type="gene ID" value="ENSG00000274671.4"/>
</dbReference>
<dbReference type="Ensembl" id="ENST00000622835.4">
    <property type="protein sequence ID" value="ENSP00000480068.1"/>
    <property type="gene ID" value="ENSG00000274671.4"/>
</dbReference>
<dbReference type="Ensembl" id="ENST00000645446.1">
    <molecule id="Q8N4S9-1"/>
    <property type="protein sequence ID" value="ENSP00000494616.1"/>
    <property type="gene ID" value="ENSG00000152939.17"/>
</dbReference>
<dbReference type="Ensembl" id="ENST00000647531.1">
    <molecule id="Q8N4S9-3"/>
    <property type="protein sequence ID" value="ENSP00000493858.1"/>
    <property type="gene ID" value="ENSG00000152939.17"/>
</dbReference>
<dbReference type="GeneID" id="153562"/>
<dbReference type="KEGG" id="hsa:153562"/>
<dbReference type="MANE-Select" id="ENST00000325631.10">
    <property type="protein sequence ID" value="ENSP00000323264.5"/>
    <property type="RefSeq nucleotide sequence ID" value="NM_001038603.3"/>
    <property type="RefSeq protein sequence ID" value="NP_001033692.2"/>
</dbReference>
<dbReference type="UCSC" id="uc003jwq.4">
    <molecule id="Q8N4S9-1"/>
    <property type="organism name" value="human"/>
</dbReference>
<dbReference type="AGR" id="HGNC:26401"/>
<dbReference type="CTD" id="153562"/>
<dbReference type="DisGeNET" id="153562"/>
<dbReference type="GeneCards" id="MARVELD2"/>
<dbReference type="GeneReviews" id="MARVELD2"/>
<dbReference type="HGNC" id="HGNC:26401">
    <property type="gene designation" value="MARVELD2"/>
</dbReference>
<dbReference type="HPA" id="ENSG00000152939">
    <property type="expression patterns" value="Tissue enhanced (thyroid)"/>
</dbReference>
<dbReference type="MalaCards" id="MARVELD2"/>
<dbReference type="MIM" id="610153">
    <property type="type" value="phenotype"/>
</dbReference>
<dbReference type="MIM" id="610572">
    <property type="type" value="gene"/>
</dbReference>
<dbReference type="neXtProt" id="NX_Q8N4S9"/>
<dbReference type="OpenTargets" id="ENSG00000152939"/>
<dbReference type="Orphanet" id="90636">
    <property type="disease" value="Rare autosomal recessive non-syndromic sensorineural deafness type DFNB"/>
</dbReference>
<dbReference type="PharmGKB" id="PA134954584"/>
<dbReference type="VEuPathDB" id="HostDB:ENSG00000152939"/>
<dbReference type="eggNOG" id="KOG4796">
    <property type="taxonomic scope" value="Eukaryota"/>
</dbReference>
<dbReference type="GeneTree" id="ENSGT00940000155771"/>
<dbReference type="HOGENOM" id="CLU_039176_1_0_1"/>
<dbReference type="InParanoid" id="Q8N4S9"/>
<dbReference type="OMA" id="LLDSTWW"/>
<dbReference type="OrthoDB" id="6284217at2759"/>
<dbReference type="PAN-GO" id="Q8N4S9">
    <property type="GO annotations" value="4 GO annotations based on evolutionary models"/>
</dbReference>
<dbReference type="PhylomeDB" id="Q8N4S9"/>
<dbReference type="TreeFam" id="TF326161"/>
<dbReference type="PathwayCommons" id="Q8N4S9"/>
<dbReference type="SignaLink" id="Q8N4S9"/>
<dbReference type="BioGRID-ORCS" id="153562">
    <property type="hits" value="9 hits in 1133 CRISPR screens"/>
</dbReference>
<dbReference type="ChiTaRS" id="MARVELD2">
    <property type="organism name" value="human"/>
</dbReference>
<dbReference type="GeneWiki" id="MARVELD2"/>
<dbReference type="GenomeRNAi" id="153562"/>
<dbReference type="Pharos" id="Q8N4S9">
    <property type="development level" value="Tbio"/>
</dbReference>
<dbReference type="PRO" id="PR:Q8N4S9"/>
<dbReference type="Proteomes" id="UP000005640">
    <property type="component" value="Chromosome 5"/>
</dbReference>
<dbReference type="RNAct" id="Q8N4S9">
    <property type="molecule type" value="protein"/>
</dbReference>
<dbReference type="Bgee" id="ENSG00000152939">
    <property type="expression patterns" value="Expressed in islet of Langerhans and 105 other cell types or tissues"/>
</dbReference>
<dbReference type="ExpressionAtlas" id="Q8N4S9">
    <property type="expression patterns" value="baseline and differential"/>
</dbReference>
<dbReference type="GO" id="GO:0016324">
    <property type="term" value="C:apical plasma membrane"/>
    <property type="evidence" value="ECO:0000314"/>
    <property type="project" value="UniProtKB"/>
</dbReference>
<dbReference type="GO" id="GO:0016323">
    <property type="term" value="C:basolateral plasma membrane"/>
    <property type="evidence" value="ECO:0000314"/>
    <property type="project" value="UniProtKB"/>
</dbReference>
<dbReference type="GO" id="GO:0005923">
    <property type="term" value="C:bicellular tight junction"/>
    <property type="evidence" value="ECO:0000314"/>
    <property type="project" value="UniProtKB"/>
</dbReference>
<dbReference type="GO" id="GO:0030054">
    <property type="term" value="C:cell junction"/>
    <property type="evidence" value="ECO:0000314"/>
    <property type="project" value="HPA"/>
</dbReference>
<dbReference type="GO" id="GO:0005737">
    <property type="term" value="C:cytoplasm"/>
    <property type="evidence" value="ECO:0000314"/>
    <property type="project" value="UniProtKB"/>
</dbReference>
<dbReference type="GO" id="GO:0031410">
    <property type="term" value="C:cytoplasmic vesicle"/>
    <property type="evidence" value="ECO:0000314"/>
    <property type="project" value="UniProtKB"/>
</dbReference>
<dbReference type="GO" id="GO:0033010">
    <property type="term" value="C:paranodal junction"/>
    <property type="evidence" value="ECO:0007669"/>
    <property type="project" value="Ensembl"/>
</dbReference>
<dbReference type="GO" id="GO:0043220">
    <property type="term" value="C:Schmidt-Lanterman incisure"/>
    <property type="evidence" value="ECO:0007669"/>
    <property type="project" value="Ensembl"/>
</dbReference>
<dbReference type="GO" id="GO:0070160">
    <property type="term" value="C:tight junction"/>
    <property type="evidence" value="ECO:0000314"/>
    <property type="project" value="UniProtKB"/>
</dbReference>
<dbReference type="GO" id="GO:0061689">
    <property type="term" value="C:tricellular tight junction"/>
    <property type="evidence" value="ECO:0000314"/>
    <property type="project" value="UniProtKB"/>
</dbReference>
<dbReference type="GO" id="GO:0070830">
    <property type="term" value="P:bicellular tight junction assembly"/>
    <property type="evidence" value="ECO:0000315"/>
    <property type="project" value="UniProtKB"/>
</dbReference>
<dbReference type="GO" id="GO:0045216">
    <property type="term" value="P:cell-cell junction organization"/>
    <property type="evidence" value="ECO:0000315"/>
    <property type="project" value="MGI"/>
</dbReference>
<dbReference type="GO" id="GO:0061028">
    <property type="term" value="P:establishment of endothelial barrier"/>
    <property type="evidence" value="ECO:0000315"/>
    <property type="project" value="UniProtKB"/>
</dbReference>
<dbReference type="GO" id="GO:0007605">
    <property type="term" value="P:sensory perception of sound"/>
    <property type="evidence" value="ECO:0000315"/>
    <property type="project" value="MGI"/>
</dbReference>
<dbReference type="Gene3D" id="6.10.140.340">
    <property type="match status" value="1"/>
</dbReference>
<dbReference type="InterPro" id="IPR031176">
    <property type="entry name" value="ELL/occludin"/>
</dbReference>
<dbReference type="InterPro" id="IPR008253">
    <property type="entry name" value="Marvel"/>
</dbReference>
<dbReference type="InterPro" id="IPR010844">
    <property type="entry name" value="Occludin_ELL"/>
</dbReference>
<dbReference type="PANTHER" id="PTHR23288:SF3">
    <property type="entry name" value="MARVEL DOMAIN-CONTAINING PROTEIN 2"/>
    <property type="match status" value="1"/>
</dbReference>
<dbReference type="PANTHER" id="PTHR23288">
    <property type="entry name" value="OCCLUDIN AND RNA POLYMERASE II ELONGATION FACTOR ELL"/>
    <property type="match status" value="1"/>
</dbReference>
<dbReference type="Pfam" id="PF01284">
    <property type="entry name" value="MARVEL"/>
    <property type="match status" value="1"/>
</dbReference>
<dbReference type="Pfam" id="PF07303">
    <property type="entry name" value="Occludin_ELL"/>
    <property type="match status" value="1"/>
</dbReference>
<dbReference type="SUPFAM" id="SSF144292">
    <property type="entry name" value="occludin/ELL-like"/>
    <property type="match status" value="1"/>
</dbReference>
<dbReference type="PROSITE" id="PS51225">
    <property type="entry name" value="MARVEL"/>
    <property type="match status" value="1"/>
</dbReference>
<dbReference type="PROSITE" id="PS51980">
    <property type="entry name" value="OCEL"/>
    <property type="match status" value="1"/>
</dbReference>
<reference key="1">
    <citation type="journal article" date="2005" name="J. Cell Biol.">
        <title>Tricellulin constitutes a novel barrier at tricellular contacts of epithelial cells.</title>
        <authorList>
            <person name="Ikenouchi J."/>
            <person name="Furuse M."/>
            <person name="Furuse K."/>
            <person name="Sasaki H."/>
            <person name="Tsukita S."/>
            <person name="Tsukita S."/>
        </authorList>
    </citation>
    <scope>NUCLEOTIDE SEQUENCE [MRNA] (ISOFORMS 1 AND 2)</scope>
    <scope>VARIANT ILE-33</scope>
</reference>
<reference key="2">
    <citation type="journal article" date="2006" name="Am. J. Hum. Genet.">
        <title>Tricellulin is a tight-junction protein necessary for hearing.</title>
        <authorList>
            <person name="Riazuddin S."/>
            <person name="Ahmed Z.M."/>
            <person name="Fanning A.S."/>
            <person name="Lagziel A."/>
            <person name="Kitajiri S."/>
            <person name="Ramzan K."/>
            <person name="Khan S.N."/>
            <person name="Chattaraj P."/>
            <person name="Friedman P.L."/>
            <person name="Anderson J.M."/>
            <person name="Belyantseva I.A."/>
            <person name="Forge A."/>
            <person name="Riazuddin S."/>
            <person name="Friedman T.B."/>
        </authorList>
    </citation>
    <scope>NUCLEOTIDE SEQUENCE [MRNA] (ISOFORMS 1 AND 3)</scope>
    <scope>INVOLVEMENT IN DFNB49</scope>
    <scope>FUNCTION</scope>
    <scope>INTERACTION WITH TJP1</scope>
    <scope>VARIANT ILE-33</scope>
    <source>
        <tissue>Lung</tissue>
    </source>
</reference>
<reference key="3">
    <citation type="journal article" date="2004" name="Nat. Genet.">
        <title>Complete sequencing and characterization of 21,243 full-length human cDNAs.</title>
        <authorList>
            <person name="Ota T."/>
            <person name="Suzuki Y."/>
            <person name="Nishikawa T."/>
            <person name="Otsuki T."/>
            <person name="Sugiyama T."/>
            <person name="Irie R."/>
            <person name="Wakamatsu A."/>
            <person name="Hayashi K."/>
            <person name="Sato H."/>
            <person name="Nagai K."/>
            <person name="Kimura K."/>
            <person name="Makita H."/>
            <person name="Sekine M."/>
            <person name="Obayashi M."/>
            <person name="Nishi T."/>
            <person name="Shibahara T."/>
            <person name="Tanaka T."/>
            <person name="Ishii S."/>
            <person name="Yamamoto J."/>
            <person name="Saito K."/>
            <person name="Kawai Y."/>
            <person name="Isono Y."/>
            <person name="Nakamura Y."/>
            <person name="Nagahari K."/>
            <person name="Murakami K."/>
            <person name="Yasuda T."/>
            <person name="Iwayanagi T."/>
            <person name="Wagatsuma M."/>
            <person name="Shiratori A."/>
            <person name="Sudo H."/>
            <person name="Hosoiri T."/>
            <person name="Kaku Y."/>
            <person name="Kodaira H."/>
            <person name="Kondo H."/>
            <person name="Sugawara M."/>
            <person name="Takahashi M."/>
            <person name="Kanda K."/>
            <person name="Yokoi T."/>
            <person name="Furuya T."/>
            <person name="Kikkawa E."/>
            <person name="Omura Y."/>
            <person name="Abe K."/>
            <person name="Kamihara K."/>
            <person name="Katsuta N."/>
            <person name="Sato K."/>
            <person name="Tanikawa M."/>
            <person name="Yamazaki M."/>
            <person name="Ninomiya K."/>
            <person name="Ishibashi T."/>
            <person name="Yamashita H."/>
            <person name="Murakawa K."/>
            <person name="Fujimori K."/>
            <person name="Tanai H."/>
            <person name="Kimata M."/>
            <person name="Watanabe M."/>
            <person name="Hiraoka S."/>
            <person name="Chiba Y."/>
            <person name="Ishida S."/>
            <person name="Ono Y."/>
            <person name="Takiguchi S."/>
            <person name="Watanabe S."/>
            <person name="Yosida M."/>
            <person name="Hotuta T."/>
            <person name="Kusano J."/>
            <person name="Kanehori K."/>
            <person name="Takahashi-Fujii A."/>
            <person name="Hara H."/>
            <person name="Tanase T.-O."/>
            <person name="Nomura Y."/>
            <person name="Togiya S."/>
            <person name="Komai F."/>
            <person name="Hara R."/>
            <person name="Takeuchi K."/>
            <person name="Arita M."/>
            <person name="Imose N."/>
            <person name="Musashino K."/>
            <person name="Yuuki H."/>
            <person name="Oshima A."/>
            <person name="Sasaki N."/>
            <person name="Aotsuka S."/>
            <person name="Yoshikawa Y."/>
            <person name="Matsunawa H."/>
            <person name="Ichihara T."/>
            <person name="Shiohata N."/>
            <person name="Sano S."/>
            <person name="Moriya S."/>
            <person name="Momiyama H."/>
            <person name="Satoh N."/>
            <person name="Takami S."/>
            <person name="Terashima Y."/>
            <person name="Suzuki O."/>
            <person name="Nakagawa S."/>
            <person name="Senoh A."/>
            <person name="Mizoguchi H."/>
            <person name="Goto Y."/>
            <person name="Shimizu F."/>
            <person name="Wakebe H."/>
            <person name="Hishigaki H."/>
            <person name="Watanabe T."/>
            <person name="Sugiyama A."/>
            <person name="Takemoto M."/>
            <person name="Kawakami B."/>
            <person name="Yamazaki M."/>
            <person name="Watanabe K."/>
            <person name="Kumagai A."/>
            <person name="Itakura S."/>
            <person name="Fukuzumi Y."/>
            <person name="Fujimori Y."/>
            <person name="Komiyama M."/>
            <person name="Tashiro H."/>
            <person name="Tanigami A."/>
            <person name="Fujiwara T."/>
            <person name="Ono T."/>
            <person name="Yamada K."/>
            <person name="Fujii Y."/>
            <person name="Ozaki K."/>
            <person name="Hirao M."/>
            <person name="Ohmori Y."/>
            <person name="Kawabata A."/>
            <person name="Hikiji T."/>
            <person name="Kobatake N."/>
            <person name="Inagaki H."/>
            <person name="Ikema Y."/>
            <person name="Okamoto S."/>
            <person name="Okitani R."/>
            <person name="Kawakami T."/>
            <person name="Noguchi S."/>
            <person name="Itoh T."/>
            <person name="Shigeta K."/>
            <person name="Senba T."/>
            <person name="Matsumura K."/>
            <person name="Nakajima Y."/>
            <person name="Mizuno T."/>
            <person name="Morinaga M."/>
            <person name="Sasaki M."/>
            <person name="Togashi T."/>
            <person name="Oyama M."/>
            <person name="Hata H."/>
            <person name="Watanabe M."/>
            <person name="Komatsu T."/>
            <person name="Mizushima-Sugano J."/>
            <person name="Satoh T."/>
            <person name="Shirai Y."/>
            <person name="Takahashi Y."/>
            <person name="Nakagawa K."/>
            <person name="Okumura K."/>
            <person name="Nagase T."/>
            <person name="Nomura N."/>
            <person name="Kikuchi H."/>
            <person name="Masuho Y."/>
            <person name="Yamashita R."/>
            <person name="Nakai K."/>
            <person name="Yada T."/>
            <person name="Nakamura Y."/>
            <person name="Ohara O."/>
            <person name="Isogai T."/>
            <person name="Sugano S."/>
        </authorList>
    </citation>
    <scope>NUCLEOTIDE SEQUENCE [LARGE SCALE MRNA] (ISOFORMS 1 AND 2)</scope>
    <scope>VARIANT ILE-33</scope>
    <source>
        <tissue>Brain</tissue>
        <tissue>Trachea</tissue>
    </source>
</reference>
<reference key="4">
    <citation type="journal article" date="2004" name="Nature">
        <title>The DNA sequence and comparative analysis of human chromosome 5.</title>
        <authorList>
            <person name="Schmutz J."/>
            <person name="Martin J."/>
            <person name="Terry A."/>
            <person name="Couronne O."/>
            <person name="Grimwood J."/>
            <person name="Lowry S."/>
            <person name="Gordon L.A."/>
            <person name="Scott D."/>
            <person name="Xie G."/>
            <person name="Huang W."/>
            <person name="Hellsten U."/>
            <person name="Tran-Gyamfi M."/>
            <person name="She X."/>
            <person name="Prabhakar S."/>
            <person name="Aerts A."/>
            <person name="Altherr M."/>
            <person name="Bajorek E."/>
            <person name="Black S."/>
            <person name="Branscomb E."/>
            <person name="Caoile C."/>
            <person name="Challacombe J.F."/>
            <person name="Chan Y.M."/>
            <person name="Denys M."/>
            <person name="Detter J.C."/>
            <person name="Escobar J."/>
            <person name="Flowers D."/>
            <person name="Fotopulos D."/>
            <person name="Glavina T."/>
            <person name="Gomez M."/>
            <person name="Gonzales E."/>
            <person name="Goodstein D."/>
            <person name="Grigoriev I."/>
            <person name="Groza M."/>
            <person name="Hammon N."/>
            <person name="Hawkins T."/>
            <person name="Haydu L."/>
            <person name="Israni S."/>
            <person name="Jett J."/>
            <person name="Kadner K."/>
            <person name="Kimball H."/>
            <person name="Kobayashi A."/>
            <person name="Lopez F."/>
            <person name="Lou Y."/>
            <person name="Martinez D."/>
            <person name="Medina C."/>
            <person name="Morgan J."/>
            <person name="Nandkeshwar R."/>
            <person name="Noonan J.P."/>
            <person name="Pitluck S."/>
            <person name="Pollard M."/>
            <person name="Predki P."/>
            <person name="Priest J."/>
            <person name="Ramirez L."/>
            <person name="Retterer J."/>
            <person name="Rodriguez A."/>
            <person name="Rogers S."/>
            <person name="Salamov A."/>
            <person name="Salazar A."/>
            <person name="Thayer N."/>
            <person name="Tice H."/>
            <person name="Tsai M."/>
            <person name="Ustaszewska A."/>
            <person name="Vo N."/>
            <person name="Wheeler J."/>
            <person name="Wu K."/>
            <person name="Yang J."/>
            <person name="Dickson M."/>
            <person name="Cheng J.-F."/>
            <person name="Eichler E.E."/>
            <person name="Olsen A."/>
            <person name="Pennacchio L.A."/>
            <person name="Rokhsar D.S."/>
            <person name="Richardson P."/>
            <person name="Lucas S.M."/>
            <person name="Myers R.M."/>
            <person name="Rubin E.M."/>
        </authorList>
    </citation>
    <scope>NUCLEOTIDE SEQUENCE [LARGE SCALE GENOMIC DNA]</scope>
    <scope>VARIANT ILE-33</scope>
</reference>
<reference key="5">
    <citation type="submission" date="2005-09" db="EMBL/GenBank/DDBJ databases">
        <authorList>
            <person name="Mural R.J."/>
            <person name="Istrail S."/>
            <person name="Sutton G.G."/>
            <person name="Florea L."/>
            <person name="Halpern A.L."/>
            <person name="Mobarry C.M."/>
            <person name="Lippert R."/>
            <person name="Walenz B."/>
            <person name="Shatkay H."/>
            <person name="Dew I."/>
            <person name="Miller J.R."/>
            <person name="Flanigan M.J."/>
            <person name="Edwards N.J."/>
            <person name="Bolanos R."/>
            <person name="Fasulo D."/>
            <person name="Halldorsson B.V."/>
            <person name="Hannenhalli S."/>
            <person name="Turner R."/>
            <person name="Yooseph S."/>
            <person name="Lu F."/>
            <person name="Nusskern D.R."/>
            <person name="Shue B.C."/>
            <person name="Zheng X.H."/>
            <person name="Zhong F."/>
            <person name="Delcher A.L."/>
            <person name="Huson D.H."/>
            <person name="Kravitz S.A."/>
            <person name="Mouchard L."/>
            <person name="Reinert K."/>
            <person name="Remington K.A."/>
            <person name="Clark A.G."/>
            <person name="Waterman M.S."/>
            <person name="Eichler E.E."/>
            <person name="Adams M.D."/>
            <person name="Hunkapiller M.W."/>
            <person name="Myers E.W."/>
            <person name="Venter J.C."/>
        </authorList>
    </citation>
    <scope>NUCLEOTIDE SEQUENCE [LARGE SCALE GENOMIC DNA]</scope>
</reference>
<reference key="6">
    <citation type="journal article" date="2004" name="Genome Res.">
        <title>The status, quality, and expansion of the NIH full-length cDNA project: the Mammalian Gene Collection (MGC).</title>
        <authorList>
            <consortium name="The MGC Project Team"/>
        </authorList>
    </citation>
    <scope>NUCLEOTIDE SEQUENCE [LARGE SCALE MRNA] (ISOFORM 1)</scope>
    <scope>VARIANT ILE-33</scope>
    <source>
        <tissue>Lung</tissue>
    </source>
</reference>
<reference key="7">
    <citation type="journal article" date="2006" name="Cell">
        <title>Global, in vivo, and site-specific phosphorylation dynamics in signaling networks.</title>
        <authorList>
            <person name="Olsen J.V."/>
            <person name="Blagoev B."/>
            <person name="Gnad F."/>
            <person name="Macek B."/>
            <person name="Kumar C."/>
            <person name="Mortensen P."/>
            <person name="Mann M."/>
        </authorList>
    </citation>
    <scope>PHOSPHORYLATION [LARGE SCALE ANALYSIS] AT SER-116 AND SER-120</scope>
    <scope>IDENTIFICATION BY MASS SPECTROMETRY [LARGE SCALE ANALYSIS]</scope>
    <source>
        <tissue>Cervix carcinoma</tissue>
    </source>
</reference>
<reference key="8">
    <citation type="journal article" date="2008" name="Mol. Cell">
        <title>Kinase-selective enrichment enables quantitative phosphoproteomics of the kinome across the cell cycle.</title>
        <authorList>
            <person name="Daub H."/>
            <person name="Olsen J.V."/>
            <person name="Bairlein M."/>
            <person name="Gnad F."/>
            <person name="Oppermann F.S."/>
            <person name="Korner R."/>
            <person name="Greff Z."/>
            <person name="Keri G."/>
            <person name="Stemmann O."/>
            <person name="Mann M."/>
        </authorList>
    </citation>
    <scope>IDENTIFICATION BY MASS SPECTROMETRY [LARGE SCALE ANALYSIS]</scope>
    <source>
        <tissue>Cervix carcinoma</tissue>
    </source>
</reference>
<reference key="9">
    <citation type="journal article" date="2008" name="Proc. Natl. Acad. Sci. U.S.A.">
        <title>A quantitative atlas of mitotic phosphorylation.</title>
        <authorList>
            <person name="Dephoure N."/>
            <person name="Zhou C."/>
            <person name="Villen J."/>
            <person name="Beausoleil S.A."/>
            <person name="Bakalarski C.E."/>
            <person name="Elledge S.J."/>
            <person name="Gygi S.P."/>
        </authorList>
    </citation>
    <scope>PHOSPHORYLATION [LARGE SCALE ANALYSIS] AT SER-116 AND SER-120</scope>
    <scope>IDENTIFICATION BY MASS SPECTROMETRY [LARGE SCALE ANALYSIS]</scope>
    <source>
        <tissue>Cervix carcinoma</tissue>
    </source>
</reference>
<reference key="10">
    <citation type="journal article" date="2013" name="J. Proteome Res.">
        <title>Toward a comprehensive characterization of a human cancer cell phosphoproteome.</title>
        <authorList>
            <person name="Zhou H."/>
            <person name="Di Palma S."/>
            <person name="Preisinger C."/>
            <person name="Peng M."/>
            <person name="Polat A.N."/>
            <person name="Heck A.J."/>
            <person name="Mohammed S."/>
        </authorList>
    </citation>
    <scope>PHOSPHORYLATION [LARGE SCALE ANALYSIS] AT SER-161; THR-166 AND SER-387</scope>
    <scope>IDENTIFICATION BY MASS SPECTROMETRY [LARGE SCALE ANALYSIS]</scope>
    <source>
        <tissue>Cervix carcinoma</tissue>
    </source>
</reference>
<reference key="11">
    <citation type="journal article" date="2017" name="Ann. N. Y. Acad. Sci.">
        <title>Tricellulin is a target of the ubiquitin ligase Itch.</title>
        <authorList>
            <person name="Jennek S."/>
            <person name="Mittag S."/>
            <person name="Reiche J."/>
            <person name="Westphal J.K."/>
            <person name="Seelk S."/>
            <person name="Doerfel M.J."/>
            <person name="Pfirrmann T."/>
            <person name="Friedrich K."/>
            <person name="Schuetz A."/>
            <person name="Heinemann U."/>
            <person name="Huber O."/>
        </authorList>
    </citation>
    <scope>UBIQUITINATION</scope>
    <scope>INTERACTION WITH ITCH</scope>
</reference>
<reference key="12">
    <citation type="journal article" date="2024" name="Nat. Chem. Biol.">
        <title>Discovery and mechanism of K63-linkage-directed deubiquitinase activity in USP53.</title>
        <authorList>
            <person name="Wendrich K."/>
            <person name="Gallant K."/>
            <person name="Recknagel S."/>
            <person name="Petroulia S."/>
            <person name="Kazi N.H."/>
            <person name="Hane J.A."/>
            <person name="Fuehrer S."/>
            <person name="Bezstarosti K."/>
            <person name="O'Dea R."/>
            <person name="Demmers J."/>
            <person name="Gersch M."/>
        </authorList>
    </citation>
    <scope>UBIQUITINATION AT LYS-412</scope>
    <scope>DEUBIQUITINATION BY USP53</scope>
</reference>
<reference evidence="19 20 21" key="13">
    <citation type="journal article" date="2017" name="Ann. N. Y. Acad. Sci.">
        <title>Crystal structure of the tricellulin C-terminal coiled-coil domain reveals a unique mode of dimerization.</title>
        <authorList>
            <person name="Schuetz A."/>
            <person name="Radusheva V."/>
            <person name="Krug S.M."/>
            <person name="Heinemann U."/>
        </authorList>
    </citation>
    <scope>X-RAY CRYSTALLOGRAPHY (2.20 ANGSTROMS) OF 439-551</scope>
    <scope>SUBCELLULAR LOCATION</scope>
    <scope>INTERACTION WITH TJP1</scope>
    <scope>COILED COIL</scope>
</reference>
<keyword id="KW-0002">3D-structure</keyword>
<keyword id="KW-0025">Alternative splicing</keyword>
<keyword id="KW-0965">Cell junction</keyword>
<keyword id="KW-1003">Cell membrane</keyword>
<keyword id="KW-0175">Coiled coil</keyword>
<keyword id="KW-0209">Deafness</keyword>
<keyword id="KW-1009">Hearing</keyword>
<keyword id="KW-1017">Isopeptide bond</keyword>
<keyword id="KW-0472">Membrane</keyword>
<keyword id="KW-1010">Non-syndromic deafness</keyword>
<keyword id="KW-0597">Phosphoprotein</keyword>
<keyword id="KW-1267">Proteomics identification</keyword>
<keyword id="KW-1185">Reference proteome</keyword>
<keyword id="KW-0796">Tight junction</keyword>
<keyword id="KW-0812">Transmembrane</keyword>
<keyword id="KW-1133">Transmembrane helix</keyword>
<keyword id="KW-0832">Ubl conjugation</keyword>
<proteinExistence type="evidence at protein level"/>